<accession>Q5N0X9</accession>
<feature type="chain" id="PRO_0000224414" description="DNA mismatch repair protein MutS">
    <location>
        <begin position="1"/>
        <end position="882"/>
    </location>
</feature>
<feature type="binding site" evidence="1">
    <location>
        <begin position="656"/>
        <end position="663"/>
    </location>
    <ligand>
        <name>ATP</name>
        <dbReference type="ChEBI" id="CHEBI:30616"/>
    </ligand>
</feature>
<dbReference type="EMBL" id="AP008231">
    <property type="protein sequence ID" value="BAD80041.1"/>
    <property type="molecule type" value="Genomic_DNA"/>
</dbReference>
<dbReference type="RefSeq" id="WP_011244161.1">
    <property type="nucleotide sequence ID" value="NC_006576.1"/>
</dbReference>
<dbReference type="SMR" id="Q5N0X9"/>
<dbReference type="KEGG" id="syc:syc1851_c"/>
<dbReference type="eggNOG" id="COG0249">
    <property type="taxonomic scope" value="Bacteria"/>
</dbReference>
<dbReference type="Proteomes" id="UP000001175">
    <property type="component" value="Chromosome"/>
</dbReference>
<dbReference type="GO" id="GO:0005829">
    <property type="term" value="C:cytosol"/>
    <property type="evidence" value="ECO:0007669"/>
    <property type="project" value="TreeGrafter"/>
</dbReference>
<dbReference type="GO" id="GO:0005524">
    <property type="term" value="F:ATP binding"/>
    <property type="evidence" value="ECO:0007669"/>
    <property type="project" value="UniProtKB-UniRule"/>
</dbReference>
<dbReference type="GO" id="GO:0140664">
    <property type="term" value="F:ATP-dependent DNA damage sensor activity"/>
    <property type="evidence" value="ECO:0007669"/>
    <property type="project" value="InterPro"/>
</dbReference>
<dbReference type="GO" id="GO:0003684">
    <property type="term" value="F:damaged DNA binding"/>
    <property type="evidence" value="ECO:0007669"/>
    <property type="project" value="UniProtKB-UniRule"/>
</dbReference>
<dbReference type="GO" id="GO:0030983">
    <property type="term" value="F:mismatched DNA binding"/>
    <property type="evidence" value="ECO:0007669"/>
    <property type="project" value="InterPro"/>
</dbReference>
<dbReference type="GO" id="GO:0006298">
    <property type="term" value="P:mismatch repair"/>
    <property type="evidence" value="ECO:0007669"/>
    <property type="project" value="UniProtKB-UniRule"/>
</dbReference>
<dbReference type="CDD" id="cd03284">
    <property type="entry name" value="ABC_MutS1"/>
    <property type="match status" value="1"/>
</dbReference>
<dbReference type="FunFam" id="1.10.1420.10:FF:000001">
    <property type="entry name" value="DNA mismatch repair protein MutS"/>
    <property type="match status" value="1"/>
</dbReference>
<dbReference type="FunFam" id="3.40.50.300:FF:000870">
    <property type="entry name" value="MutS protein homolog 4"/>
    <property type="match status" value="1"/>
</dbReference>
<dbReference type="Gene3D" id="1.10.1420.10">
    <property type="match status" value="2"/>
</dbReference>
<dbReference type="Gene3D" id="3.40.1170.10">
    <property type="entry name" value="DNA repair protein MutS, domain I"/>
    <property type="match status" value="1"/>
</dbReference>
<dbReference type="Gene3D" id="3.30.420.110">
    <property type="entry name" value="MutS, connector domain"/>
    <property type="match status" value="1"/>
</dbReference>
<dbReference type="Gene3D" id="3.40.50.300">
    <property type="entry name" value="P-loop containing nucleotide triphosphate hydrolases"/>
    <property type="match status" value="1"/>
</dbReference>
<dbReference type="HAMAP" id="MF_00096">
    <property type="entry name" value="MutS"/>
    <property type="match status" value="1"/>
</dbReference>
<dbReference type="InterPro" id="IPR005748">
    <property type="entry name" value="DNA_mismatch_repair_MutS"/>
</dbReference>
<dbReference type="InterPro" id="IPR007695">
    <property type="entry name" value="DNA_mismatch_repair_MutS-lik_N"/>
</dbReference>
<dbReference type="InterPro" id="IPR017261">
    <property type="entry name" value="DNA_mismatch_repair_MutS/MSH"/>
</dbReference>
<dbReference type="InterPro" id="IPR000432">
    <property type="entry name" value="DNA_mismatch_repair_MutS_C"/>
</dbReference>
<dbReference type="InterPro" id="IPR007861">
    <property type="entry name" value="DNA_mismatch_repair_MutS_clamp"/>
</dbReference>
<dbReference type="InterPro" id="IPR007696">
    <property type="entry name" value="DNA_mismatch_repair_MutS_core"/>
</dbReference>
<dbReference type="InterPro" id="IPR016151">
    <property type="entry name" value="DNA_mismatch_repair_MutS_N"/>
</dbReference>
<dbReference type="InterPro" id="IPR036187">
    <property type="entry name" value="DNA_mismatch_repair_MutS_sf"/>
</dbReference>
<dbReference type="InterPro" id="IPR007860">
    <property type="entry name" value="DNA_mmatch_repair_MutS_con_dom"/>
</dbReference>
<dbReference type="InterPro" id="IPR045076">
    <property type="entry name" value="MutS"/>
</dbReference>
<dbReference type="InterPro" id="IPR036678">
    <property type="entry name" value="MutS_con_dom_sf"/>
</dbReference>
<dbReference type="InterPro" id="IPR027417">
    <property type="entry name" value="P-loop_NTPase"/>
</dbReference>
<dbReference type="NCBIfam" id="TIGR01070">
    <property type="entry name" value="mutS1"/>
    <property type="match status" value="1"/>
</dbReference>
<dbReference type="NCBIfam" id="NF003810">
    <property type="entry name" value="PRK05399.1"/>
    <property type="match status" value="1"/>
</dbReference>
<dbReference type="PANTHER" id="PTHR11361:SF34">
    <property type="entry name" value="DNA MISMATCH REPAIR PROTEIN MSH1, MITOCHONDRIAL"/>
    <property type="match status" value="1"/>
</dbReference>
<dbReference type="PANTHER" id="PTHR11361">
    <property type="entry name" value="DNA MISMATCH REPAIR PROTEIN MUTS FAMILY MEMBER"/>
    <property type="match status" value="1"/>
</dbReference>
<dbReference type="Pfam" id="PF01624">
    <property type="entry name" value="MutS_I"/>
    <property type="match status" value="1"/>
</dbReference>
<dbReference type="Pfam" id="PF05188">
    <property type="entry name" value="MutS_II"/>
    <property type="match status" value="1"/>
</dbReference>
<dbReference type="Pfam" id="PF05192">
    <property type="entry name" value="MutS_III"/>
    <property type="match status" value="1"/>
</dbReference>
<dbReference type="Pfam" id="PF05190">
    <property type="entry name" value="MutS_IV"/>
    <property type="match status" value="1"/>
</dbReference>
<dbReference type="Pfam" id="PF00488">
    <property type="entry name" value="MutS_V"/>
    <property type="match status" value="1"/>
</dbReference>
<dbReference type="PIRSF" id="PIRSF037677">
    <property type="entry name" value="DNA_mis_repair_Msh6"/>
    <property type="match status" value="1"/>
</dbReference>
<dbReference type="SMART" id="SM00534">
    <property type="entry name" value="MUTSac"/>
    <property type="match status" value="1"/>
</dbReference>
<dbReference type="SMART" id="SM00533">
    <property type="entry name" value="MUTSd"/>
    <property type="match status" value="1"/>
</dbReference>
<dbReference type="SUPFAM" id="SSF55271">
    <property type="entry name" value="DNA repair protein MutS, domain I"/>
    <property type="match status" value="1"/>
</dbReference>
<dbReference type="SUPFAM" id="SSF53150">
    <property type="entry name" value="DNA repair protein MutS, domain II"/>
    <property type="match status" value="1"/>
</dbReference>
<dbReference type="SUPFAM" id="SSF48334">
    <property type="entry name" value="DNA repair protein MutS, domain III"/>
    <property type="match status" value="1"/>
</dbReference>
<dbReference type="SUPFAM" id="SSF52540">
    <property type="entry name" value="P-loop containing nucleoside triphosphate hydrolases"/>
    <property type="match status" value="1"/>
</dbReference>
<dbReference type="PROSITE" id="PS00486">
    <property type="entry name" value="DNA_MISMATCH_REPAIR_2"/>
    <property type="match status" value="1"/>
</dbReference>
<proteinExistence type="inferred from homology"/>
<keyword id="KW-0067">ATP-binding</keyword>
<keyword id="KW-0227">DNA damage</keyword>
<keyword id="KW-0234">DNA repair</keyword>
<keyword id="KW-0238">DNA-binding</keyword>
<keyword id="KW-0547">Nucleotide-binding</keyword>
<organism>
    <name type="scientific">Synechococcus sp. (strain ATCC 27144 / PCC 6301 / SAUG 1402/1)</name>
    <name type="common">Anacystis nidulans</name>
    <dbReference type="NCBI Taxonomy" id="269084"/>
    <lineage>
        <taxon>Bacteria</taxon>
        <taxon>Bacillati</taxon>
        <taxon>Cyanobacteriota</taxon>
        <taxon>Cyanophyceae</taxon>
        <taxon>Synechococcales</taxon>
        <taxon>Synechococcaceae</taxon>
        <taxon>Synechococcus</taxon>
    </lineage>
</organism>
<sequence>MTTSELPEHLAKHEVRYADHRQVERDRLTPMMQHYAEVKDQHLQQILLYRMGDFFECFFQDAIVVARELELVLTSKEAGKEVGRVPMAGIPYHALDRYASQLVEKGYAIAICDQVETAAQAQGPLVRREITRIITPGTILEEGMLQARRNNFLAAVVIAGEHWGLAYADSSTGDYWTSQSTGLEGLTQELYRLQPSEVLFPSAAPDLAGLLRPGQSKPQQIPDCLPDSFCYALRSPMPFELHEARQRLLEHFQLRSLEGCGCEQLPLAIRAAGGLLDYLGETQRESLAPLQKPRTYSLSEFLILDQQTRRNLEITQTQRDGSFHGSLLWALDRTMTSMGGRLLRRWLLQPLLNPEAIRNRQAAIQELCQDGRLRQDLRSLLQKIYDLERLSGRAGAGTANARDLLALAESLLRLPELAQLLSRAQSPLLAQLQQVPPELEQLGDRLQQHLVESPPLQLTEGGLIRSGVAIALDELRQQVESDRQWIASLEASERTATGINSLKVGYSKTFGYFISLSRSKADQVPDHYIRRQTLTNEERFITPDLKERESRILNAQTDLNQLEYDLFVGLRSEVSHHVETIRAIATAVAAADVLAALAEVAVYQNYCCPEIRDDRQLAIQDGRHPVVEQALPSGFYVPNSCGLGSDRGPDLIVLTGPNASGKSCYLRQVGLIQLLAQIGSFVPAKNAQVGICDRIFTRVGAVDDLATGQSTFMVEMDETANILNHATARSLVLLDEIGRGTATFDGLSIAWAVAEYLAREIQARTIFATHYHELNELSGLLKNVANFQVTVKELPDRIVFLHQVQPGGADRSYGIEAARLAGLPSEVIDRAREVMSRIEKHSRIAVGLRRGNGSQRRTQASPQQIDATIATEQLGLFSGPSH</sequence>
<gene>
    <name evidence="1" type="primary">mutS</name>
    <name type="ordered locus">syc1851_c</name>
</gene>
<reference key="1">
    <citation type="journal article" date="2007" name="Photosyn. Res.">
        <title>Complete nucleotide sequence of the freshwater unicellular cyanobacterium Synechococcus elongatus PCC 6301 chromosome: gene content and organization.</title>
        <authorList>
            <person name="Sugita C."/>
            <person name="Ogata K."/>
            <person name="Shikata M."/>
            <person name="Jikuya H."/>
            <person name="Takano J."/>
            <person name="Furumichi M."/>
            <person name="Kanehisa M."/>
            <person name="Omata T."/>
            <person name="Sugiura M."/>
            <person name="Sugita M."/>
        </authorList>
    </citation>
    <scope>NUCLEOTIDE SEQUENCE [LARGE SCALE GENOMIC DNA]</scope>
    <source>
        <strain>ATCC 27144 / PCC 6301 / SAUG 1402/1</strain>
    </source>
</reference>
<protein>
    <recommendedName>
        <fullName evidence="1">DNA mismatch repair protein MutS</fullName>
    </recommendedName>
</protein>
<comment type="function">
    <text evidence="1">This protein is involved in the repair of mismatches in DNA. It is possible that it carries out the mismatch recognition step. This protein has a weak ATPase activity.</text>
</comment>
<comment type="similarity">
    <text evidence="1">Belongs to the DNA mismatch repair MutS family.</text>
</comment>
<evidence type="ECO:0000255" key="1">
    <source>
        <dbReference type="HAMAP-Rule" id="MF_00096"/>
    </source>
</evidence>
<name>MUTS_SYNP6</name>